<keyword id="KW-0025">Alternative splicing</keyword>
<keyword id="KW-0106">Calcium</keyword>
<keyword id="KW-0130">Cell adhesion</keyword>
<keyword id="KW-1003">Cell membrane</keyword>
<keyword id="KW-0325">Glycoprotein</keyword>
<keyword id="KW-0472">Membrane</keyword>
<keyword id="KW-1267">Proteomics identification</keyword>
<keyword id="KW-1185">Reference proteome</keyword>
<keyword id="KW-0677">Repeat</keyword>
<keyword id="KW-0732">Signal</keyword>
<keyword id="KW-0812">Transmembrane</keyword>
<keyword id="KW-1133">Transmembrane helix</keyword>
<feature type="signal peptide" evidence="2">
    <location>
        <begin position="1"/>
        <end position="31"/>
    </location>
</feature>
<feature type="chain" id="PRO_0000003985" description="Protocadherin gamma-C3">
    <location>
        <begin position="32"/>
        <end position="934"/>
    </location>
</feature>
<feature type="topological domain" description="Extracellular" evidence="2">
    <location>
        <begin position="32"/>
        <end position="693"/>
    </location>
</feature>
<feature type="transmembrane region" description="Helical" evidence="2">
    <location>
        <begin position="694"/>
        <end position="714"/>
    </location>
</feature>
<feature type="topological domain" description="Cytoplasmic" evidence="2">
    <location>
        <begin position="715"/>
        <end position="934"/>
    </location>
</feature>
<feature type="domain" description="Cadherin 1" evidence="3">
    <location>
        <begin position="32"/>
        <end position="135"/>
    </location>
</feature>
<feature type="domain" description="Cadherin 2" evidence="3">
    <location>
        <begin position="136"/>
        <end position="244"/>
    </location>
</feature>
<feature type="domain" description="Cadherin 3" evidence="3">
    <location>
        <begin position="245"/>
        <end position="352"/>
    </location>
</feature>
<feature type="domain" description="Cadherin 4" evidence="3">
    <location>
        <begin position="353"/>
        <end position="457"/>
    </location>
</feature>
<feature type="domain" description="Cadherin 5" evidence="3">
    <location>
        <begin position="458"/>
        <end position="567"/>
    </location>
</feature>
<feature type="domain" description="Cadherin 6" evidence="3">
    <location>
        <begin position="572"/>
        <end position="685"/>
    </location>
</feature>
<feature type="region of interest" description="Disordered" evidence="4">
    <location>
        <begin position="804"/>
        <end position="843"/>
    </location>
</feature>
<feature type="region of interest" description="Disordered" evidence="4">
    <location>
        <begin position="904"/>
        <end position="934"/>
    </location>
</feature>
<feature type="compositionally biased region" description="Polar residues" evidence="4">
    <location>
        <begin position="812"/>
        <end position="843"/>
    </location>
</feature>
<feature type="compositionally biased region" description="Basic residues" evidence="4">
    <location>
        <begin position="924"/>
        <end position="934"/>
    </location>
</feature>
<feature type="glycosylation site" description="N-linked (GlcNAc...) asparagine" evidence="2">
    <location>
        <position position="245"/>
    </location>
</feature>
<feature type="glycosylation site" description="N-linked (GlcNAc...) asparagine" evidence="2">
    <location>
        <position position="424"/>
    </location>
</feature>
<feature type="glycosylation site" description="N-linked (GlcNAc...) asparagine" evidence="2">
    <location>
        <position position="478"/>
    </location>
</feature>
<feature type="glycosylation site" description="N-linked (GlcNAc...) asparagine" evidence="2">
    <location>
        <position position="550"/>
    </location>
</feature>
<feature type="glycosylation site" description="N-linked (GlcNAc...) asparagine" evidence="2">
    <location>
        <position position="615"/>
    </location>
</feature>
<feature type="glycosylation site" description="N-linked (GlcNAc...) asparagine" evidence="2">
    <location>
        <position position="689"/>
    </location>
</feature>
<feature type="splice variant" id="VSP_008698" description="In isoform 2." evidence="5">
    <original>QAPPNTDWRFSQAQRPGTSGSQNGDDTGTWPNNQFDTEMLQAMILASASEAAD</original>
    <variation>VRFSKSCLTLLVLFYSYIILRKEWSCFFSDEDVFLVMHSHFQLALPRSKLVPL</variation>
    <location>
        <begin position="811"/>
        <end position="863"/>
    </location>
</feature>
<feature type="splice variant" id="VSP_008699" description="In isoform 2." evidence="5">
    <location>
        <begin position="864"/>
        <end position="934"/>
    </location>
</feature>
<feature type="sequence conflict" description="In Ref. 1; AAA75391." evidence="6" ref="1">
    <original>R</original>
    <variation>P</variation>
    <location>
        <position position="67"/>
    </location>
</feature>
<feature type="sequence conflict" description="In Ref. 1; AAA75391." evidence="6" ref="1">
    <original>V</original>
    <variation>L</variation>
    <location>
        <position position="164"/>
    </location>
</feature>
<feature type="sequence conflict" description="In Ref. 1; AAA75391." evidence="6" ref="1">
    <original>PL</original>
    <variation>S</variation>
    <location>
        <begin position="366"/>
        <end position="367"/>
    </location>
</feature>
<feature type="sequence conflict" description="In Ref. 1; AAA75391." evidence="6" ref="1">
    <original>L</original>
    <variation>F</variation>
    <location>
        <position position="611"/>
    </location>
</feature>
<feature type="sequence conflict" description="In Ref. 2; AAC08350." evidence="6" ref="2">
    <original>RS</original>
    <variation>PG</variation>
    <location>
        <begin position="768"/>
        <end position="769"/>
    </location>
</feature>
<evidence type="ECO:0000250" key="1"/>
<evidence type="ECO:0000255" key="2"/>
<evidence type="ECO:0000255" key="3">
    <source>
        <dbReference type="PROSITE-ProRule" id="PRU00043"/>
    </source>
</evidence>
<evidence type="ECO:0000256" key="4">
    <source>
        <dbReference type="SAM" id="MobiDB-lite"/>
    </source>
</evidence>
<evidence type="ECO:0000303" key="5">
    <source>
    </source>
</evidence>
<evidence type="ECO:0000305" key="6"/>
<proteinExistence type="evidence at protein level"/>
<organism>
    <name type="scientific">Homo sapiens</name>
    <name type="common">Human</name>
    <dbReference type="NCBI Taxonomy" id="9606"/>
    <lineage>
        <taxon>Eukaryota</taxon>
        <taxon>Metazoa</taxon>
        <taxon>Chordata</taxon>
        <taxon>Craniata</taxon>
        <taxon>Vertebrata</taxon>
        <taxon>Euteleostomi</taxon>
        <taxon>Mammalia</taxon>
        <taxon>Eutheria</taxon>
        <taxon>Euarchontoglires</taxon>
        <taxon>Primates</taxon>
        <taxon>Haplorrhini</taxon>
        <taxon>Catarrhini</taxon>
        <taxon>Hominidae</taxon>
        <taxon>Homo</taxon>
    </lineage>
</organism>
<gene>
    <name type="primary">PCDHGC3</name>
    <name type="synonym">PCDH2</name>
</gene>
<comment type="function">
    <text>Potential calcium-dependent cell-adhesion protein. May be involved in the establishment and maintenance of specific neuronal connections in the brain.</text>
</comment>
<comment type="subcellular location">
    <subcellularLocation>
        <location evidence="1">Cell membrane</location>
        <topology evidence="1">Single-pass type I membrane protein</topology>
    </subcellularLocation>
</comment>
<comment type="alternative products">
    <event type="alternative splicing"/>
    <isoform>
        <id>Q9UN70-1</id>
        <name>1</name>
        <sequence type="displayed"/>
    </isoform>
    <isoform>
        <id>Q9UN70-2</id>
        <name>2</name>
        <name>Short</name>
        <sequence type="described" ref="VSP_008698 VSP_008699"/>
    </isoform>
</comment>
<comment type="sequence caution" evidence="6">
    <conflict type="miscellaneous discrepancy">
        <sequence resource="EMBL-CDS" id="AAA36421"/>
    </conflict>
    <text>Contaminating sequence. The C-terminus matches chromosome 8 region.</text>
</comment>
<comment type="sequence caution" evidence="6">
    <conflict type="frameshift">
        <sequence resource="EMBL-CDS" id="AAA75391"/>
    </conflict>
</comment>
<comment type="sequence caution" evidence="6">
    <molecule>Isoform 2</molecule>
    <conflict type="frameshift">
        <sequence resource="EMBL-CDS" id="AAA36420"/>
    </conflict>
</comment>
<accession>Q9UN70</accession>
<accession>O60622</accession>
<accession>Q08192</accession>
<accession>Q9Y5C4</accession>
<dbReference type="EMBL" id="L11371">
    <property type="protein sequence ID" value="AAA36420.1"/>
    <property type="status" value="ALT_FRAME"/>
    <property type="molecule type" value="mRNA"/>
</dbReference>
<dbReference type="EMBL" id="L11372">
    <property type="protein sequence ID" value="AAA36421.1"/>
    <property type="status" value="ALT_SEQ"/>
    <property type="molecule type" value="mRNA"/>
</dbReference>
<dbReference type="EMBL" id="L11373">
    <property type="protein sequence ID" value="AAA75391.1"/>
    <property type="status" value="ALT_FRAME"/>
    <property type="molecule type" value="mRNA"/>
</dbReference>
<dbReference type="EMBL" id="AF052685">
    <property type="protein sequence ID" value="AAC08350.1"/>
    <property type="molecule type" value="Genomic_DNA"/>
</dbReference>
<dbReference type="EMBL" id="AF052683">
    <property type="protein sequence ID" value="AAC08350.1"/>
    <property type="status" value="JOINED"/>
    <property type="molecule type" value="Genomic_DNA"/>
</dbReference>
<dbReference type="EMBL" id="AF052684">
    <property type="protein sequence ID" value="AAC08350.1"/>
    <property type="status" value="JOINED"/>
    <property type="molecule type" value="Genomic_DNA"/>
</dbReference>
<dbReference type="EMBL" id="AF152337">
    <property type="protein sequence ID" value="AAD43731.1"/>
    <property type="molecule type" value="mRNA"/>
</dbReference>
<dbReference type="EMBL" id="AF152524">
    <property type="protein sequence ID" value="AAD43784.1"/>
    <property type="molecule type" value="mRNA"/>
</dbReference>
<dbReference type="EMBL" id="BC019299">
    <property type="protein sequence ID" value="AAH19299.1"/>
    <property type="molecule type" value="mRNA"/>
</dbReference>
<dbReference type="EMBL" id="BC026218">
    <property type="protein sequence ID" value="AAH26218.1"/>
    <property type="molecule type" value="mRNA"/>
</dbReference>
<dbReference type="CCDS" id="CCDS4261.1">
    <molecule id="Q9UN70-1"/>
</dbReference>
<dbReference type="CCDS" id="CCDS75348.1">
    <molecule id="Q9UN70-2"/>
</dbReference>
<dbReference type="RefSeq" id="NP_002579.2">
    <molecule id="Q9UN70-1"/>
    <property type="nucleotide sequence ID" value="NM_002588.3"/>
</dbReference>
<dbReference type="RefSeq" id="NP_115778.1">
    <molecule id="Q9UN70-2"/>
    <property type="nucleotide sequence ID" value="NM_032402.2"/>
</dbReference>
<dbReference type="SMR" id="Q9UN70"/>
<dbReference type="BioGRID" id="111131">
    <property type="interactions" value="55"/>
</dbReference>
<dbReference type="FunCoup" id="Q9UN70">
    <property type="interactions" value="325"/>
</dbReference>
<dbReference type="IntAct" id="Q9UN70">
    <property type="interactions" value="48"/>
</dbReference>
<dbReference type="STRING" id="9606.ENSP00000312070"/>
<dbReference type="GlyCosmos" id="Q9UN70">
    <property type="glycosylation" value="6 sites, No reported glycans"/>
</dbReference>
<dbReference type="GlyGen" id="Q9UN70">
    <property type="glycosylation" value="10 sites, 6 N-linked glycans (3 sites), 1 O-linked glycan (4 sites)"/>
</dbReference>
<dbReference type="iPTMnet" id="Q9UN70"/>
<dbReference type="PhosphoSitePlus" id="Q9UN70"/>
<dbReference type="BioMuta" id="PCDHGC3"/>
<dbReference type="DMDM" id="37999813"/>
<dbReference type="jPOST" id="Q9UN70"/>
<dbReference type="MassIVE" id="Q9UN70"/>
<dbReference type="PaxDb" id="9606-ENSP00000312070"/>
<dbReference type="PeptideAtlas" id="Q9UN70"/>
<dbReference type="ProteomicsDB" id="85253">
    <molecule id="Q9UN70-1"/>
</dbReference>
<dbReference type="ProteomicsDB" id="85254">
    <molecule id="Q9UN70-2"/>
</dbReference>
<dbReference type="Pumba" id="Q9UN70"/>
<dbReference type="ABCD" id="Q9UN70">
    <property type="antibodies" value="1 sequenced antibody"/>
</dbReference>
<dbReference type="Antibodypedia" id="35055">
    <property type="antibodies" value="308 antibodies from 28 providers"/>
</dbReference>
<dbReference type="DNASU" id="5098"/>
<dbReference type="Ensembl" id="ENST00000308177.5">
    <molecule id="Q9UN70-1"/>
    <property type="protein sequence ID" value="ENSP00000312070.3"/>
    <property type="gene ID" value="ENSG00000240184.7"/>
</dbReference>
<dbReference type="Ensembl" id="ENST00000611950.1">
    <molecule id="Q9UN70-2"/>
    <property type="protein sequence ID" value="ENSP00000481219.1"/>
    <property type="gene ID" value="ENSG00000240184.7"/>
</dbReference>
<dbReference type="GeneID" id="5098"/>
<dbReference type="KEGG" id="hsa:5098"/>
<dbReference type="MANE-Select" id="ENST00000308177.5">
    <property type="protein sequence ID" value="ENSP00000312070.3"/>
    <property type="RefSeq nucleotide sequence ID" value="NM_002588.4"/>
    <property type="RefSeq protein sequence ID" value="NP_002579.2"/>
</dbReference>
<dbReference type="UCSC" id="uc003lku.2">
    <molecule id="Q9UN70-1"/>
    <property type="organism name" value="human"/>
</dbReference>
<dbReference type="AGR" id="HGNC:8716"/>
<dbReference type="CTD" id="5098"/>
<dbReference type="DisGeNET" id="5098"/>
<dbReference type="GeneCards" id="PCDHGC3"/>
<dbReference type="HGNC" id="HGNC:8716">
    <property type="gene designation" value="PCDHGC3"/>
</dbReference>
<dbReference type="HPA" id="ENSG00000240184">
    <property type="expression patterns" value="Tissue enhanced (brain)"/>
</dbReference>
<dbReference type="MalaCards" id="PCDHGC3"/>
<dbReference type="MIM" id="603627">
    <property type="type" value="gene"/>
</dbReference>
<dbReference type="MIM" id="604968">
    <property type="type" value="gene"/>
</dbReference>
<dbReference type="neXtProt" id="NX_Q9UN70"/>
<dbReference type="OpenTargets" id="ENSG00000240184"/>
<dbReference type="PharmGKB" id="PA33064"/>
<dbReference type="VEuPathDB" id="HostDB:ENSG00000240184"/>
<dbReference type="eggNOG" id="KOG3594">
    <property type="taxonomic scope" value="Eukaryota"/>
</dbReference>
<dbReference type="GeneTree" id="ENSGT00940000164266"/>
<dbReference type="HOGENOM" id="CLU_006480_3_0_1"/>
<dbReference type="InParanoid" id="Q9UN70"/>
<dbReference type="OMA" id="SFPTGEM"/>
<dbReference type="OrthoDB" id="6252479at2759"/>
<dbReference type="PAN-GO" id="Q9UN70">
    <property type="GO annotations" value="2 GO annotations based on evolutionary models"/>
</dbReference>
<dbReference type="PhylomeDB" id="Q9UN70"/>
<dbReference type="TreeFam" id="TF332299"/>
<dbReference type="PathwayCommons" id="Q9UN70"/>
<dbReference type="SignaLink" id="Q9UN70"/>
<dbReference type="SIGNOR" id="Q9UN70"/>
<dbReference type="BioGRID-ORCS" id="5098">
    <property type="hits" value="20 hits in 1100 CRISPR screens"/>
</dbReference>
<dbReference type="GeneWiki" id="PCDHGC3"/>
<dbReference type="GenomeRNAi" id="5098"/>
<dbReference type="Pharos" id="Q9UN70">
    <property type="development level" value="Tbio"/>
</dbReference>
<dbReference type="PRO" id="PR:Q9UN70"/>
<dbReference type="Proteomes" id="UP000005640">
    <property type="component" value="Chromosome 5"/>
</dbReference>
<dbReference type="RNAct" id="Q9UN70">
    <property type="molecule type" value="protein"/>
</dbReference>
<dbReference type="Bgee" id="ENSG00000240184">
    <property type="expression patterns" value="Expressed in right frontal lobe and 97 other cell types or tissues"/>
</dbReference>
<dbReference type="ExpressionAtlas" id="Q9UN70">
    <property type="expression patterns" value="baseline and differential"/>
</dbReference>
<dbReference type="GO" id="GO:0016020">
    <property type="term" value="C:membrane"/>
    <property type="evidence" value="ECO:0000303"/>
    <property type="project" value="UniProtKB"/>
</dbReference>
<dbReference type="GO" id="GO:0005886">
    <property type="term" value="C:plasma membrane"/>
    <property type="evidence" value="ECO:0000318"/>
    <property type="project" value="GO_Central"/>
</dbReference>
<dbReference type="GO" id="GO:0005509">
    <property type="term" value="F:calcium ion binding"/>
    <property type="evidence" value="ECO:0007669"/>
    <property type="project" value="InterPro"/>
</dbReference>
<dbReference type="GO" id="GO:0016339">
    <property type="term" value="P:calcium-dependent cell-cell adhesion via plasma membrane cell adhesion molecules"/>
    <property type="evidence" value="ECO:0000303"/>
    <property type="project" value="UniProtKB"/>
</dbReference>
<dbReference type="GO" id="GO:0007155">
    <property type="term" value="P:cell adhesion"/>
    <property type="evidence" value="ECO:0000318"/>
    <property type="project" value="GO_Central"/>
</dbReference>
<dbReference type="GO" id="GO:0007156">
    <property type="term" value="P:homophilic cell adhesion via plasma membrane adhesion molecules"/>
    <property type="evidence" value="ECO:0007669"/>
    <property type="project" value="InterPro"/>
</dbReference>
<dbReference type="GO" id="GO:0043524">
    <property type="term" value="P:negative regulation of neuron apoptotic process"/>
    <property type="evidence" value="ECO:0007669"/>
    <property type="project" value="Ensembl"/>
</dbReference>
<dbReference type="GO" id="GO:0007399">
    <property type="term" value="P:nervous system development"/>
    <property type="evidence" value="ECO:0007669"/>
    <property type="project" value="UniProtKB-ARBA"/>
</dbReference>
<dbReference type="GO" id="GO:0050808">
    <property type="term" value="P:synapse organization"/>
    <property type="evidence" value="ECO:0007669"/>
    <property type="project" value="Ensembl"/>
</dbReference>
<dbReference type="CDD" id="cd11304">
    <property type="entry name" value="Cadherin_repeat"/>
    <property type="match status" value="6"/>
</dbReference>
<dbReference type="FunFam" id="2.60.40.60:FF:000004">
    <property type="entry name" value="Protocadherin 1 gamma 2"/>
    <property type="match status" value="1"/>
</dbReference>
<dbReference type="FunFam" id="2.60.40.60:FF:000185">
    <property type="entry name" value="Protocadherin 2 alpha c"/>
    <property type="match status" value="1"/>
</dbReference>
<dbReference type="FunFam" id="2.60.40.60:FF:000001">
    <property type="entry name" value="Protocadherin alpha 2"/>
    <property type="match status" value="1"/>
</dbReference>
<dbReference type="FunFam" id="2.60.40.60:FF:000002">
    <property type="entry name" value="Protocadherin alpha 2"/>
    <property type="match status" value="1"/>
</dbReference>
<dbReference type="FunFam" id="2.60.40.60:FF:000006">
    <property type="entry name" value="Protocadherin alpha 2"/>
    <property type="match status" value="1"/>
</dbReference>
<dbReference type="FunFam" id="2.60.40.60:FF:000018">
    <property type="entry name" value="Protocadherin gamma c3"/>
    <property type="match status" value="1"/>
</dbReference>
<dbReference type="Gene3D" id="2.60.40.60">
    <property type="entry name" value="Cadherins"/>
    <property type="match status" value="6"/>
</dbReference>
<dbReference type="InterPro" id="IPR002126">
    <property type="entry name" value="Cadherin-like_dom"/>
</dbReference>
<dbReference type="InterPro" id="IPR015919">
    <property type="entry name" value="Cadherin-like_sf"/>
</dbReference>
<dbReference type="InterPro" id="IPR032455">
    <property type="entry name" value="Cadherin_C"/>
</dbReference>
<dbReference type="InterPro" id="IPR031904">
    <property type="entry name" value="Cadherin_CBD"/>
</dbReference>
<dbReference type="InterPro" id="IPR020894">
    <property type="entry name" value="Cadherin_CS"/>
</dbReference>
<dbReference type="InterPro" id="IPR013164">
    <property type="entry name" value="Cadherin_N"/>
</dbReference>
<dbReference type="InterPro" id="IPR050174">
    <property type="entry name" value="Protocadherin/Cadherin-CA"/>
</dbReference>
<dbReference type="PANTHER" id="PTHR24028">
    <property type="entry name" value="CADHERIN-87A"/>
    <property type="match status" value="1"/>
</dbReference>
<dbReference type="PANTHER" id="PTHR24028:SF236">
    <property type="entry name" value="PROTOCADHERIN GAMMA-C3"/>
    <property type="match status" value="1"/>
</dbReference>
<dbReference type="Pfam" id="PF00028">
    <property type="entry name" value="Cadherin"/>
    <property type="match status" value="5"/>
</dbReference>
<dbReference type="Pfam" id="PF08266">
    <property type="entry name" value="Cadherin_2"/>
    <property type="match status" value="1"/>
</dbReference>
<dbReference type="Pfam" id="PF16492">
    <property type="entry name" value="Cadherin_C_2"/>
    <property type="match status" value="1"/>
</dbReference>
<dbReference type="Pfam" id="PF15974">
    <property type="entry name" value="Cadherin_tail"/>
    <property type="match status" value="1"/>
</dbReference>
<dbReference type="PRINTS" id="PR00205">
    <property type="entry name" value="CADHERIN"/>
</dbReference>
<dbReference type="SMART" id="SM00112">
    <property type="entry name" value="CA"/>
    <property type="match status" value="6"/>
</dbReference>
<dbReference type="SUPFAM" id="SSF49313">
    <property type="entry name" value="Cadherin-like"/>
    <property type="match status" value="6"/>
</dbReference>
<dbReference type="PROSITE" id="PS00232">
    <property type="entry name" value="CADHERIN_1"/>
    <property type="match status" value="5"/>
</dbReference>
<dbReference type="PROSITE" id="PS50268">
    <property type="entry name" value="CADHERIN_2"/>
    <property type="match status" value="6"/>
</dbReference>
<sequence>MVPEAWRSGLVSTGRVVGVLLLLGALNKASTVIHYEIPEEREKGFAVGNVVANLGLDLGSLSARRFRVVSGASRRFFEVNRETGEMFVNDRLDREELCGTLPSCTVTLELVVENPLELFSVEVVIQDINDNNPAFPTQEMKLEISEAVAPGTRFPLESAHDPDVGSNSLQTYELSRNEYFALRVQTREDSTKYAELVLERALDREREPSLQLVLTALDGGTPALSASLPIHIKVLDANDNAPVFNQSLYRARVLEDAPSGTRVVQVLATDLDEGPNGEIIYSFGSHNRAGVRQLFALDLVTGMLTIKGRLDFEDTKLHEIYIQAKDKGANPEGAHCKVLVEVVDVNDNAPEITVTSVYSPVPEDAPLGTVIALLSVTDLDAGENGLVTCEVPPGLPFSLTSSLKNYFTLKTSADLDRETVPEYNLSITARDAGTPSLSALTIVRVQVSDINDNPPQSSQSSYDVYIEENNLPGAPILNLSVWDPDAPQNARLSFFLLEQGAETGLVGRYFTINRDNGIVSSLVPLDYEDRREFELTAHISDGGTPVLATNISVNIFVTDRNDNAPQVLYPRPGGSSVEMLPRGTSAGHLVSRVVGWDADAGHNAWLSYSLLGSPNQSLFAIGLHTGQISTARPVQDTDSPRQTLTVLIKDNGEPSLSTTATLTVSVTEDSPEARAEFPSGSAPREQKKNLTFYLLLSLILVSVGFVVTVFGVIIFKVYKWKQSRDLYRAPVSSLYRTPGPSLHADAVRGGLMSPHLYHQVYLTTDSRRSDPLLKKPGAASPLASRQNTLRSCDPVFYRQVLGAESAPPGQQAPPNTDWRFSQAQRPGTSGSQNGDDTGTWPNNQFDTEMLQAMILASASEAADGSSTLGGGAGTMGLSARYGPQFTLQHVPDYRQNVYIPGSNATLTNAAGKRDGKAPAGGNGNKKKSGKKEKK</sequence>
<reference key="1">
    <citation type="journal article" date="1993" name="EMBO J.">
        <title>Protocadherins: a large family of cadherin-related molecules in central nervous system.</title>
        <authorList>
            <person name="Sano K."/>
            <person name="Tanihara H."/>
            <person name="Heimark R.L."/>
            <person name="Obata S."/>
            <person name="Davidson M."/>
            <person name="St John T."/>
            <person name="Taketani S."/>
            <person name="Suzuki S."/>
        </authorList>
    </citation>
    <scope>NUCLEOTIDE SEQUENCE [MRNA] (ISOFORM 1)</scope>
    <source>
        <tissue>Brain</tissue>
    </source>
</reference>
<reference key="2">
    <citation type="journal article" date="1997" name="Science">
        <title>Nonsyndromic deafness DFNA1 associated with mutation of a human homolog of the Drosophila gene diaphanous.</title>
        <authorList>
            <person name="Lynch E.D."/>
            <person name="Lee M.K."/>
            <person name="Morrow J.E."/>
            <person name="Welcsh P.L."/>
            <person name="Leon P.E."/>
            <person name="King M.-C."/>
        </authorList>
    </citation>
    <scope>NUCLEOTIDE SEQUENCE [GENOMIC DNA] (ISOFORM 1)</scope>
</reference>
<reference key="3">
    <citation type="journal article" date="1999" name="Cell">
        <title>A striking organization of a large family of human neural cadherin-like cell adhesion genes.</title>
        <authorList>
            <person name="Wu Q."/>
            <person name="Maniatis T."/>
        </authorList>
    </citation>
    <scope>NUCLEOTIDE SEQUENCE [MRNA] (ISOFORMS 1 AND 2)</scope>
    <source>
        <tissue>Brain</tissue>
    </source>
</reference>
<reference key="4">
    <citation type="journal article" date="2004" name="Genome Res.">
        <title>The status, quality, and expansion of the NIH full-length cDNA project: the Mammalian Gene Collection (MGC).</title>
        <authorList>
            <consortium name="The MGC Project Team"/>
        </authorList>
    </citation>
    <scope>NUCLEOTIDE SEQUENCE [LARGE SCALE MRNA] (ISOFORM 1)</scope>
    <source>
        <tissue>Brain</tissue>
        <tissue>Skin</tissue>
    </source>
</reference>
<reference key="5">
    <citation type="journal article" date="2014" name="J. Proteomics">
        <title>An enzyme assisted RP-RPLC approach for in-depth analysis of human liver phosphoproteome.</title>
        <authorList>
            <person name="Bian Y."/>
            <person name="Song C."/>
            <person name="Cheng K."/>
            <person name="Dong M."/>
            <person name="Wang F."/>
            <person name="Huang J."/>
            <person name="Sun D."/>
            <person name="Wang L."/>
            <person name="Ye M."/>
            <person name="Zou H."/>
        </authorList>
    </citation>
    <scope>IDENTIFICATION BY MASS SPECTROMETRY [LARGE SCALE ANALYSIS]</scope>
    <source>
        <tissue>Liver</tissue>
    </source>
</reference>
<name>PCDGK_HUMAN</name>
<protein>
    <recommendedName>
        <fullName>Protocadherin gamma-C3</fullName>
        <shortName>PCDH-gamma-C3</shortName>
    </recommendedName>
    <alternativeName>
        <fullName>Protocadherin-2</fullName>
    </alternativeName>
    <alternativeName>
        <fullName>Protocadherin-43</fullName>
        <shortName>PC-43</shortName>
    </alternativeName>
</protein>